<dbReference type="EMBL" id="CP000377">
    <property type="protein sequence ID" value="ABF63649.1"/>
    <property type="molecule type" value="Genomic_DNA"/>
</dbReference>
<dbReference type="RefSeq" id="WP_005623419.1">
    <property type="nucleotide sequence ID" value="NC_008044.1"/>
</dbReference>
<dbReference type="SMR" id="Q1GI67"/>
<dbReference type="STRING" id="292414.TM1040_0916"/>
<dbReference type="GeneID" id="28249929"/>
<dbReference type="KEGG" id="sit:TM1040_0916"/>
<dbReference type="eggNOG" id="COG0333">
    <property type="taxonomic scope" value="Bacteria"/>
</dbReference>
<dbReference type="HOGENOM" id="CLU_129084_1_3_5"/>
<dbReference type="OrthoDB" id="9801927at2"/>
<dbReference type="Proteomes" id="UP000000636">
    <property type="component" value="Chromosome"/>
</dbReference>
<dbReference type="GO" id="GO:0015934">
    <property type="term" value="C:large ribosomal subunit"/>
    <property type="evidence" value="ECO:0007669"/>
    <property type="project" value="InterPro"/>
</dbReference>
<dbReference type="GO" id="GO:0003735">
    <property type="term" value="F:structural constituent of ribosome"/>
    <property type="evidence" value="ECO:0007669"/>
    <property type="project" value="InterPro"/>
</dbReference>
<dbReference type="GO" id="GO:0006412">
    <property type="term" value="P:translation"/>
    <property type="evidence" value="ECO:0007669"/>
    <property type="project" value="UniProtKB-UniRule"/>
</dbReference>
<dbReference type="Gene3D" id="1.20.5.640">
    <property type="entry name" value="Single helix bin"/>
    <property type="match status" value="1"/>
</dbReference>
<dbReference type="HAMAP" id="MF_00340">
    <property type="entry name" value="Ribosomal_bL32"/>
    <property type="match status" value="1"/>
</dbReference>
<dbReference type="InterPro" id="IPR002677">
    <property type="entry name" value="Ribosomal_bL32"/>
</dbReference>
<dbReference type="InterPro" id="IPR044957">
    <property type="entry name" value="Ribosomal_bL32_bact"/>
</dbReference>
<dbReference type="InterPro" id="IPR011332">
    <property type="entry name" value="Ribosomal_zn-bd"/>
</dbReference>
<dbReference type="NCBIfam" id="TIGR01031">
    <property type="entry name" value="rpmF_bact"/>
    <property type="match status" value="1"/>
</dbReference>
<dbReference type="PANTHER" id="PTHR35534">
    <property type="entry name" value="50S RIBOSOMAL PROTEIN L32"/>
    <property type="match status" value="1"/>
</dbReference>
<dbReference type="PANTHER" id="PTHR35534:SF1">
    <property type="entry name" value="LARGE RIBOSOMAL SUBUNIT PROTEIN BL32"/>
    <property type="match status" value="1"/>
</dbReference>
<dbReference type="Pfam" id="PF01783">
    <property type="entry name" value="Ribosomal_L32p"/>
    <property type="match status" value="1"/>
</dbReference>
<dbReference type="SUPFAM" id="SSF57829">
    <property type="entry name" value="Zn-binding ribosomal proteins"/>
    <property type="match status" value="1"/>
</dbReference>
<proteinExistence type="inferred from homology"/>
<reference key="1">
    <citation type="submission" date="2006-05" db="EMBL/GenBank/DDBJ databases">
        <title>Complete sequence of chromosome of Silicibacter sp. TM1040.</title>
        <authorList>
            <consortium name="US DOE Joint Genome Institute"/>
            <person name="Copeland A."/>
            <person name="Lucas S."/>
            <person name="Lapidus A."/>
            <person name="Barry K."/>
            <person name="Detter J.C."/>
            <person name="Glavina del Rio T."/>
            <person name="Hammon N."/>
            <person name="Israni S."/>
            <person name="Dalin E."/>
            <person name="Tice H."/>
            <person name="Pitluck S."/>
            <person name="Brettin T."/>
            <person name="Bruce D."/>
            <person name="Han C."/>
            <person name="Tapia R."/>
            <person name="Goodwin L."/>
            <person name="Thompson L.S."/>
            <person name="Gilna P."/>
            <person name="Schmutz J."/>
            <person name="Larimer F."/>
            <person name="Land M."/>
            <person name="Hauser L."/>
            <person name="Kyrpides N."/>
            <person name="Kim E."/>
            <person name="Belas R."/>
            <person name="Moran M.A."/>
            <person name="Buchan A."/>
            <person name="Gonzalez J.M."/>
            <person name="Schell M.A."/>
            <person name="Sun F."/>
            <person name="Richardson P."/>
        </authorList>
    </citation>
    <scope>NUCLEOTIDE SEQUENCE [LARGE SCALE GENOMIC DNA]</scope>
    <source>
        <strain>TM1040</strain>
    </source>
</reference>
<accession>Q1GI67</accession>
<gene>
    <name evidence="1" type="primary">rpmF</name>
    <name type="ordered locus">TM1040_0916</name>
</gene>
<protein>
    <recommendedName>
        <fullName evidence="1">Large ribosomal subunit protein bL32</fullName>
    </recommendedName>
    <alternativeName>
        <fullName evidence="3">50S ribosomal protein L32</fullName>
    </alternativeName>
</protein>
<organism>
    <name type="scientific">Ruegeria sp. (strain TM1040)</name>
    <name type="common">Silicibacter sp.</name>
    <dbReference type="NCBI Taxonomy" id="292414"/>
    <lineage>
        <taxon>Bacteria</taxon>
        <taxon>Pseudomonadati</taxon>
        <taxon>Pseudomonadota</taxon>
        <taxon>Alphaproteobacteria</taxon>
        <taxon>Rhodobacterales</taxon>
        <taxon>Roseobacteraceae</taxon>
        <taxon>Ruegeria</taxon>
    </lineage>
</organism>
<keyword id="KW-1185">Reference proteome</keyword>
<keyword id="KW-0687">Ribonucleoprotein</keyword>
<keyword id="KW-0689">Ribosomal protein</keyword>
<feature type="chain" id="PRO_0000296566" description="Large ribosomal subunit protein bL32">
    <location>
        <begin position="1"/>
        <end position="68"/>
    </location>
</feature>
<feature type="region of interest" description="Disordered" evidence="2">
    <location>
        <begin position="1"/>
        <end position="20"/>
    </location>
</feature>
<name>RL32_RUEST</name>
<sequence>MAVQQNKVSKSRRNNRRAHDALVAANPNECSNCGELRRPHHVCPSCGHYDDKEIVAQADEIDLDEDAA</sequence>
<evidence type="ECO:0000255" key="1">
    <source>
        <dbReference type="HAMAP-Rule" id="MF_00340"/>
    </source>
</evidence>
<evidence type="ECO:0000256" key="2">
    <source>
        <dbReference type="SAM" id="MobiDB-lite"/>
    </source>
</evidence>
<evidence type="ECO:0000305" key="3"/>
<comment type="similarity">
    <text evidence="1">Belongs to the bacterial ribosomal protein bL32 family.</text>
</comment>